<evidence type="ECO:0000255" key="1">
    <source>
        <dbReference type="HAMAP-Rule" id="MF_01151"/>
    </source>
</evidence>
<evidence type="ECO:0000256" key="2">
    <source>
        <dbReference type="SAM" id="MobiDB-lite"/>
    </source>
</evidence>
<keyword id="KW-0143">Chaperone</keyword>
<keyword id="KW-0963">Cytoplasm</keyword>
<keyword id="KW-0346">Stress response</keyword>
<organism>
    <name type="scientific">Bacillus cereus (strain ZK / E33L)</name>
    <dbReference type="NCBI Taxonomy" id="288681"/>
    <lineage>
        <taxon>Bacteria</taxon>
        <taxon>Bacillati</taxon>
        <taxon>Bacillota</taxon>
        <taxon>Bacilli</taxon>
        <taxon>Bacillales</taxon>
        <taxon>Bacillaceae</taxon>
        <taxon>Bacillus</taxon>
        <taxon>Bacillus cereus group</taxon>
    </lineage>
</organism>
<comment type="function">
    <text evidence="1">Participates actively in the response to hyperosmotic and heat shock by preventing the aggregation of stress-denatured proteins, in association with DnaK and GrpE. It is the nucleotide exchange factor for DnaK and may function as a thermosensor. Unfolded proteins bind initially to DnaJ; upon interaction with the DnaJ-bound protein, DnaK hydrolyzes its bound ATP, resulting in the formation of a stable complex. GrpE releases ADP from DnaK; ATP binding to DnaK triggers the release of the substrate protein, thus completing the reaction cycle. Several rounds of ATP-dependent interactions between DnaJ, DnaK and GrpE are required for fully efficient folding.</text>
</comment>
<comment type="subunit">
    <text evidence="1">Homodimer.</text>
</comment>
<comment type="subcellular location">
    <subcellularLocation>
        <location evidence="1">Cytoplasm</location>
    </subcellularLocation>
</comment>
<comment type="similarity">
    <text evidence="1">Belongs to the GrpE family.</text>
</comment>
<name>GRPE_BACCZ</name>
<gene>
    <name evidence="1" type="primary">grpE</name>
    <name type="ordered locus">BCE33L4062</name>
</gene>
<proteinExistence type="inferred from homology"/>
<feature type="chain" id="PRO_1000053539" description="Protein GrpE">
    <location>
        <begin position="1"/>
        <end position="188"/>
    </location>
</feature>
<feature type="region of interest" description="Disordered" evidence="2">
    <location>
        <begin position="1"/>
        <end position="31"/>
    </location>
</feature>
<feature type="compositionally biased region" description="Basic and acidic residues" evidence="2">
    <location>
        <begin position="1"/>
        <end position="16"/>
    </location>
</feature>
<sequence length="188" mass="21657">MEERNEQVVEEVKEAQVEEAVTPENSEETVEEKSEAALLQEKVDELQAKLTETEGRTLRLQADFENYKRRVQMDKQAAEKYRAQSLVSDILPALDNFERAMQVEATDEQTKSLLQGMEMVHRQLLEALNKEGVEVIEAVGKQFDPNEHQAIMQVEDSEFESNAVVEEFQKGYKLKDRVIRPSMVKVNQ</sequence>
<accession>Q634M6</accession>
<dbReference type="EMBL" id="CP000001">
    <property type="protein sequence ID" value="AAU16207.1"/>
    <property type="molecule type" value="Genomic_DNA"/>
</dbReference>
<dbReference type="RefSeq" id="WP_000392710.1">
    <property type="nucleotide sequence ID" value="NZ_CP009968.1"/>
</dbReference>
<dbReference type="SMR" id="Q634M6"/>
<dbReference type="GeneID" id="72450997"/>
<dbReference type="KEGG" id="bcz:BCE33L4062"/>
<dbReference type="PATRIC" id="fig|288681.22.peg.1328"/>
<dbReference type="Proteomes" id="UP000002612">
    <property type="component" value="Chromosome"/>
</dbReference>
<dbReference type="GO" id="GO:0005737">
    <property type="term" value="C:cytoplasm"/>
    <property type="evidence" value="ECO:0007669"/>
    <property type="project" value="UniProtKB-SubCell"/>
</dbReference>
<dbReference type="GO" id="GO:0000774">
    <property type="term" value="F:adenyl-nucleotide exchange factor activity"/>
    <property type="evidence" value="ECO:0007669"/>
    <property type="project" value="InterPro"/>
</dbReference>
<dbReference type="GO" id="GO:0042803">
    <property type="term" value="F:protein homodimerization activity"/>
    <property type="evidence" value="ECO:0007669"/>
    <property type="project" value="InterPro"/>
</dbReference>
<dbReference type="GO" id="GO:0051087">
    <property type="term" value="F:protein-folding chaperone binding"/>
    <property type="evidence" value="ECO:0007669"/>
    <property type="project" value="InterPro"/>
</dbReference>
<dbReference type="GO" id="GO:0051082">
    <property type="term" value="F:unfolded protein binding"/>
    <property type="evidence" value="ECO:0007669"/>
    <property type="project" value="TreeGrafter"/>
</dbReference>
<dbReference type="GO" id="GO:0006457">
    <property type="term" value="P:protein folding"/>
    <property type="evidence" value="ECO:0007669"/>
    <property type="project" value="InterPro"/>
</dbReference>
<dbReference type="CDD" id="cd00446">
    <property type="entry name" value="GrpE"/>
    <property type="match status" value="1"/>
</dbReference>
<dbReference type="FunFam" id="2.30.22.10:FF:000001">
    <property type="entry name" value="Protein GrpE"/>
    <property type="match status" value="1"/>
</dbReference>
<dbReference type="FunFam" id="3.90.20.20:FF:000002">
    <property type="entry name" value="Protein GrpE"/>
    <property type="match status" value="1"/>
</dbReference>
<dbReference type="Gene3D" id="3.90.20.20">
    <property type="match status" value="1"/>
</dbReference>
<dbReference type="Gene3D" id="2.30.22.10">
    <property type="entry name" value="Head domain of nucleotide exchange factor GrpE"/>
    <property type="match status" value="1"/>
</dbReference>
<dbReference type="HAMAP" id="MF_01151">
    <property type="entry name" value="GrpE"/>
    <property type="match status" value="1"/>
</dbReference>
<dbReference type="InterPro" id="IPR000740">
    <property type="entry name" value="GrpE"/>
</dbReference>
<dbReference type="InterPro" id="IPR013805">
    <property type="entry name" value="GrpE_coiled_coil"/>
</dbReference>
<dbReference type="InterPro" id="IPR009012">
    <property type="entry name" value="GrpE_head"/>
</dbReference>
<dbReference type="NCBIfam" id="NF010738">
    <property type="entry name" value="PRK14140.1"/>
    <property type="match status" value="1"/>
</dbReference>
<dbReference type="PANTHER" id="PTHR21237">
    <property type="entry name" value="GRPE PROTEIN"/>
    <property type="match status" value="1"/>
</dbReference>
<dbReference type="PANTHER" id="PTHR21237:SF23">
    <property type="entry name" value="GRPE PROTEIN HOMOLOG, MITOCHONDRIAL"/>
    <property type="match status" value="1"/>
</dbReference>
<dbReference type="Pfam" id="PF01025">
    <property type="entry name" value="GrpE"/>
    <property type="match status" value="1"/>
</dbReference>
<dbReference type="PRINTS" id="PR00773">
    <property type="entry name" value="GRPEPROTEIN"/>
</dbReference>
<dbReference type="SUPFAM" id="SSF58014">
    <property type="entry name" value="Coiled-coil domain of nucleotide exchange factor GrpE"/>
    <property type="match status" value="1"/>
</dbReference>
<dbReference type="SUPFAM" id="SSF51064">
    <property type="entry name" value="Head domain of nucleotide exchange factor GrpE"/>
    <property type="match status" value="1"/>
</dbReference>
<dbReference type="PROSITE" id="PS01071">
    <property type="entry name" value="GRPE"/>
    <property type="match status" value="1"/>
</dbReference>
<protein>
    <recommendedName>
        <fullName evidence="1">Protein GrpE</fullName>
    </recommendedName>
    <alternativeName>
        <fullName evidence="1">HSP-70 cofactor</fullName>
    </alternativeName>
</protein>
<reference key="1">
    <citation type="journal article" date="2006" name="J. Bacteriol.">
        <title>Pathogenomic sequence analysis of Bacillus cereus and Bacillus thuringiensis isolates closely related to Bacillus anthracis.</title>
        <authorList>
            <person name="Han C.S."/>
            <person name="Xie G."/>
            <person name="Challacombe J.F."/>
            <person name="Altherr M.R."/>
            <person name="Bhotika S.S."/>
            <person name="Bruce D."/>
            <person name="Campbell C.S."/>
            <person name="Campbell M.L."/>
            <person name="Chen J."/>
            <person name="Chertkov O."/>
            <person name="Cleland C."/>
            <person name="Dimitrijevic M."/>
            <person name="Doggett N.A."/>
            <person name="Fawcett J.J."/>
            <person name="Glavina T."/>
            <person name="Goodwin L.A."/>
            <person name="Hill K.K."/>
            <person name="Hitchcock P."/>
            <person name="Jackson P.J."/>
            <person name="Keim P."/>
            <person name="Kewalramani A.R."/>
            <person name="Longmire J."/>
            <person name="Lucas S."/>
            <person name="Malfatti S."/>
            <person name="McMurry K."/>
            <person name="Meincke L.J."/>
            <person name="Misra M."/>
            <person name="Moseman B.L."/>
            <person name="Mundt M."/>
            <person name="Munk A.C."/>
            <person name="Okinaka R.T."/>
            <person name="Parson-Quintana B."/>
            <person name="Reilly L.P."/>
            <person name="Richardson P."/>
            <person name="Robinson D.L."/>
            <person name="Rubin E."/>
            <person name="Saunders E."/>
            <person name="Tapia R."/>
            <person name="Tesmer J.G."/>
            <person name="Thayer N."/>
            <person name="Thompson L.S."/>
            <person name="Tice H."/>
            <person name="Ticknor L.O."/>
            <person name="Wills P.L."/>
            <person name="Brettin T.S."/>
            <person name="Gilna P."/>
        </authorList>
    </citation>
    <scope>NUCLEOTIDE SEQUENCE [LARGE SCALE GENOMIC DNA]</scope>
    <source>
        <strain>ZK / E33L</strain>
    </source>
</reference>